<protein>
    <recommendedName>
        <fullName evidence="1">Succinate--CoA ligase [ADP-forming] subunit beta</fullName>
        <ecNumber evidence="1">6.2.1.5</ecNumber>
    </recommendedName>
    <alternativeName>
        <fullName evidence="1">Succinyl-CoA synthetase subunit beta</fullName>
        <shortName evidence="1">SCS-beta</shortName>
    </alternativeName>
</protein>
<feature type="chain" id="PRO_1000082127" description="Succinate--CoA ligase [ADP-forming] subunit beta">
    <location>
        <begin position="1"/>
        <end position="387"/>
    </location>
</feature>
<feature type="domain" description="ATP-grasp" evidence="1">
    <location>
        <begin position="9"/>
        <end position="236"/>
    </location>
</feature>
<feature type="binding site" evidence="1">
    <location>
        <position position="45"/>
    </location>
    <ligand>
        <name>ATP</name>
        <dbReference type="ChEBI" id="CHEBI:30616"/>
    </ligand>
</feature>
<feature type="binding site" evidence="1">
    <location>
        <begin position="52"/>
        <end position="54"/>
    </location>
    <ligand>
        <name>ATP</name>
        <dbReference type="ChEBI" id="CHEBI:30616"/>
    </ligand>
</feature>
<feature type="binding site" evidence="1">
    <location>
        <position position="94"/>
    </location>
    <ligand>
        <name>ATP</name>
        <dbReference type="ChEBI" id="CHEBI:30616"/>
    </ligand>
</feature>
<feature type="binding site" evidence="1">
    <location>
        <position position="99"/>
    </location>
    <ligand>
        <name>ATP</name>
        <dbReference type="ChEBI" id="CHEBI:30616"/>
    </ligand>
</feature>
<feature type="binding site" evidence="1">
    <location>
        <position position="191"/>
    </location>
    <ligand>
        <name>Mg(2+)</name>
        <dbReference type="ChEBI" id="CHEBI:18420"/>
    </ligand>
</feature>
<feature type="binding site" evidence="1">
    <location>
        <position position="205"/>
    </location>
    <ligand>
        <name>Mg(2+)</name>
        <dbReference type="ChEBI" id="CHEBI:18420"/>
    </ligand>
</feature>
<feature type="binding site" evidence="1">
    <location>
        <position position="256"/>
    </location>
    <ligand>
        <name>substrate</name>
        <note>ligand shared with subunit alpha</note>
    </ligand>
</feature>
<feature type="binding site" evidence="1">
    <location>
        <begin position="318"/>
        <end position="320"/>
    </location>
    <ligand>
        <name>substrate</name>
        <note>ligand shared with subunit alpha</note>
    </ligand>
</feature>
<evidence type="ECO:0000255" key="1">
    <source>
        <dbReference type="HAMAP-Rule" id="MF_00558"/>
    </source>
</evidence>
<sequence>MDLFEYQAKELFAKHNVPTTPGRVTDSAEDAKAIATEIGKPVMVKAQVKVGGRGKAGGVKYAATPDDAFTHAQNILGLDIKGHVVKKLLVAEASDIAEEYYISFLLDRSNRTYLAMCSVEGGMEIEEVAATKPDRLAKVPVNAVKGVDLAFAREIAEKGHLPAEVLDAAAVTIQKLWEVFTKEDATLVEVNPLVRTPDDQILALDGKVTLDANADFRQEGHKEFEDKDATDPLELKAKENDLNYVKLDGEVGIIGNGAGLVMSTLDVVAYAGEKHGGVKPANFLDIGGGASAEVMANGLDVILNDSQVKSVFVNVFGGITSCDAVANGIVKALEILGDEANKPLVVRLDGNNVDEGRRILAEANHPLVVQAETMDSGADKAAELANK</sequence>
<reference key="1">
    <citation type="submission" date="2007-04" db="EMBL/GenBank/DDBJ databases">
        <title>Complete sequence of chromosome of Mycobacterium gilvum PYR-GCK.</title>
        <authorList>
            <consortium name="US DOE Joint Genome Institute"/>
            <person name="Copeland A."/>
            <person name="Lucas S."/>
            <person name="Lapidus A."/>
            <person name="Barry K."/>
            <person name="Detter J.C."/>
            <person name="Glavina del Rio T."/>
            <person name="Hammon N."/>
            <person name="Israni S."/>
            <person name="Dalin E."/>
            <person name="Tice H."/>
            <person name="Pitluck S."/>
            <person name="Chain P."/>
            <person name="Malfatti S."/>
            <person name="Shin M."/>
            <person name="Vergez L."/>
            <person name="Schmutz J."/>
            <person name="Larimer F."/>
            <person name="Land M."/>
            <person name="Hauser L."/>
            <person name="Kyrpides N."/>
            <person name="Mikhailova N."/>
            <person name="Miller C."/>
            <person name="Richardson P."/>
        </authorList>
    </citation>
    <scope>NUCLEOTIDE SEQUENCE [LARGE SCALE GENOMIC DNA]</scope>
    <source>
        <strain>PYR-GCK</strain>
    </source>
</reference>
<gene>
    <name evidence="1" type="primary">sucC</name>
    <name type="ordered locus">Mflv_1865</name>
</gene>
<accession>A4T6V7</accession>
<proteinExistence type="inferred from homology"/>
<keyword id="KW-0067">ATP-binding</keyword>
<keyword id="KW-0436">Ligase</keyword>
<keyword id="KW-0460">Magnesium</keyword>
<keyword id="KW-0479">Metal-binding</keyword>
<keyword id="KW-0547">Nucleotide-binding</keyword>
<keyword id="KW-0816">Tricarboxylic acid cycle</keyword>
<dbReference type="EC" id="6.2.1.5" evidence="1"/>
<dbReference type="EMBL" id="CP000656">
    <property type="protein sequence ID" value="ABP44345.1"/>
    <property type="molecule type" value="Genomic_DNA"/>
</dbReference>
<dbReference type="SMR" id="A4T6V7"/>
<dbReference type="STRING" id="350054.Mflv_1865"/>
<dbReference type="KEGG" id="mgi:Mflv_1865"/>
<dbReference type="eggNOG" id="COG0045">
    <property type="taxonomic scope" value="Bacteria"/>
</dbReference>
<dbReference type="HOGENOM" id="CLU_037430_0_2_11"/>
<dbReference type="OrthoDB" id="9802602at2"/>
<dbReference type="UniPathway" id="UPA00223">
    <property type="reaction ID" value="UER00999"/>
</dbReference>
<dbReference type="GO" id="GO:0005829">
    <property type="term" value="C:cytosol"/>
    <property type="evidence" value="ECO:0007669"/>
    <property type="project" value="TreeGrafter"/>
</dbReference>
<dbReference type="GO" id="GO:0042709">
    <property type="term" value="C:succinate-CoA ligase complex"/>
    <property type="evidence" value="ECO:0007669"/>
    <property type="project" value="TreeGrafter"/>
</dbReference>
<dbReference type="GO" id="GO:0005524">
    <property type="term" value="F:ATP binding"/>
    <property type="evidence" value="ECO:0007669"/>
    <property type="project" value="UniProtKB-UniRule"/>
</dbReference>
<dbReference type="GO" id="GO:0000287">
    <property type="term" value="F:magnesium ion binding"/>
    <property type="evidence" value="ECO:0007669"/>
    <property type="project" value="UniProtKB-UniRule"/>
</dbReference>
<dbReference type="GO" id="GO:0004775">
    <property type="term" value="F:succinate-CoA ligase (ADP-forming) activity"/>
    <property type="evidence" value="ECO:0007669"/>
    <property type="project" value="UniProtKB-UniRule"/>
</dbReference>
<dbReference type="GO" id="GO:0004776">
    <property type="term" value="F:succinate-CoA ligase (GDP-forming) activity"/>
    <property type="evidence" value="ECO:0007669"/>
    <property type="project" value="RHEA"/>
</dbReference>
<dbReference type="GO" id="GO:0006104">
    <property type="term" value="P:succinyl-CoA metabolic process"/>
    <property type="evidence" value="ECO:0007669"/>
    <property type="project" value="TreeGrafter"/>
</dbReference>
<dbReference type="GO" id="GO:0006099">
    <property type="term" value="P:tricarboxylic acid cycle"/>
    <property type="evidence" value="ECO:0007669"/>
    <property type="project" value="UniProtKB-UniRule"/>
</dbReference>
<dbReference type="FunFam" id="3.30.1490.20:FF:000014">
    <property type="entry name" value="Succinate--CoA ligase [ADP-forming] subunit beta"/>
    <property type="match status" value="1"/>
</dbReference>
<dbReference type="FunFam" id="3.30.470.20:FF:000002">
    <property type="entry name" value="Succinate--CoA ligase [ADP-forming] subunit beta"/>
    <property type="match status" value="1"/>
</dbReference>
<dbReference type="FunFam" id="3.40.50.261:FF:000007">
    <property type="entry name" value="Succinate--CoA ligase [ADP-forming] subunit beta"/>
    <property type="match status" value="1"/>
</dbReference>
<dbReference type="Gene3D" id="3.30.1490.20">
    <property type="entry name" value="ATP-grasp fold, A domain"/>
    <property type="match status" value="1"/>
</dbReference>
<dbReference type="Gene3D" id="3.30.470.20">
    <property type="entry name" value="ATP-grasp fold, B domain"/>
    <property type="match status" value="1"/>
</dbReference>
<dbReference type="Gene3D" id="3.40.50.261">
    <property type="entry name" value="Succinyl-CoA synthetase domains"/>
    <property type="match status" value="1"/>
</dbReference>
<dbReference type="HAMAP" id="MF_00558">
    <property type="entry name" value="Succ_CoA_beta"/>
    <property type="match status" value="1"/>
</dbReference>
<dbReference type="InterPro" id="IPR011761">
    <property type="entry name" value="ATP-grasp"/>
</dbReference>
<dbReference type="InterPro" id="IPR013650">
    <property type="entry name" value="ATP-grasp_succ-CoA_synth-type"/>
</dbReference>
<dbReference type="InterPro" id="IPR013815">
    <property type="entry name" value="ATP_grasp_subdomain_1"/>
</dbReference>
<dbReference type="InterPro" id="IPR017866">
    <property type="entry name" value="Succ-CoA_synthase_bsu_CS"/>
</dbReference>
<dbReference type="InterPro" id="IPR005811">
    <property type="entry name" value="SUCC_ACL_C"/>
</dbReference>
<dbReference type="InterPro" id="IPR005809">
    <property type="entry name" value="Succ_CoA_ligase-like_bsu"/>
</dbReference>
<dbReference type="InterPro" id="IPR016102">
    <property type="entry name" value="Succinyl-CoA_synth-like"/>
</dbReference>
<dbReference type="NCBIfam" id="NF001913">
    <property type="entry name" value="PRK00696.1"/>
    <property type="match status" value="1"/>
</dbReference>
<dbReference type="NCBIfam" id="TIGR01016">
    <property type="entry name" value="sucCoAbeta"/>
    <property type="match status" value="1"/>
</dbReference>
<dbReference type="PANTHER" id="PTHR11815:SF10">
    <property type="entry name" value="SUCCINATE--COA LIGASE [GDP-FORMING] SUBUNIT BETA, MITOCHONDRIAL"/>
    <property type="match status" value="1"/>
</dbReference>
<dbReference type="PANTHER" id="PTHR11815">
    <property type="entry name" value="SUCCINYL-COA SYNTHETASE BETA CHAIN"/>
    <property type="match status" value="1"/>
</dbReference>
<dbReference type="Pfam" id="PF08442">
    <property type="entry name" value="ATP-grasp_2"/>
    <property type="match status" value="1"/>
</dbReference>
<dbReference type="Pfam" id="PF00549">
    <property type="entry name" value="Ligase_CoA"/>
    <property type="match status" value="1"/>
</dbReference>
<dbReference type="PIRSF" id="PIRSF001554">
    <property type="entry name" value="SucCS_beta"/>
    <property type="match status" value="1"/>
</dbReference>
<dbReference type="SUPFAM" id="SSF56059">
    <property type="entry name" value="Glutathione synthetase ATP-binding domain-like"/>
    <property type="match status" value="1"/>
</dbReference>
<dbReference type="SUPFAM" id="SSF52210">
    <property type="entry name" value="Succinyl-CoA synthetase domains"/>
    <property type="match status" value="1"/>
</dbReference>
<dbReference type="PROSITE" id="PS50975">
    <property type="entry name" value="ATP_GRASP"/>
    <property type="match status" value="1"/>
</dbReference>
<dbReference type="PROSITE" id="PS01217">
    <property type="entry name" value="SUCCINYL_COA_LIG_3"/>
    <property type="match status" value="1"/>
</dbReference>
<name>SUCC_MYCGI</name>
<organism>
    <name type="scientific">Mycolicibacterium gilvum (strain PYR-GCK)</name>
    <name type="common">Mycobacterium gilvum (strain PYR-GCK)</name>
    <dbReference type="NCBI Taxonomy" id="350054"/>
    <lineage>
        <taxon>Bacteria</taxon>
        <taxon>Bacillati</taxon>
        <taxon>Actinomycetota</taxon>
        <taxon>Actinomycetes</taxon>
        <taxon>Mycobacteriales</taxon>
        <taxon>Mycobacteriaceae</taxon>
        <taxon>Mycolicibacterium</taxon>
    </lineage>
</organism>
<comment type="function">
    <text evidence="1">Succinyl-CoA synthetase functions in the citric acid cycle (TCA), coupling the hydrolysis of succinyl-CoA to the synthesis of either ATP or GTP and thus represents the only step of substrate-level phosphorylation in the TCA. The beta subunit provides nucleotide specificity of the enzyme and binds the substrate succinate, while the binding sites for coenzyme A and phosphate are found in the alpha subunit.</text>
</comment>
<comment type="catalytic activity">
    <reaction evidence="1">
        <text>succinate + ATP + CoA = succinyl-CoA + ADP + phosphate</text>
        <dbReference type="Rhea" id="RHEA:17661"/>
        <dbReference type="ChEBI" id="CHEBI:30031"/>
        <dbReference type="ChEBI" id="CHEBI:30616"/>
        <dbReference type="ChEBI" id="CHEBI:43474"/>
        <dbReference type="ChEBI" id="CHEBI:57287"/>
        <dbReference type="ChEBI" id="CHEBI:57292"/>
        <dbReference type="ChEBI" id="CHEBI:456216"/>
        <dbReference type="EC" id="6.2.1.5"/>
    </reaction>
    <physiologicalReaction direction="right-to-left" evidence="1">
        <dbReference type="Rhea" id="RHEA:17663"/>
    </physiologicalReaction>
</comment>
<comment type="catalytic activity">
    <reaction evidence="1">
        <text>GTP + succinate + CoA = succinyl-CoA + GDP + phosphate</text>
        <dbReference type="Rhea" id="RHEA:22120"/>
        <dbReference type="ChEBI" id="CHEBI:30031"/>
        <dbReference type="ChEBI" id="CHEBI:37565"/>
        <dbReference type="ChEBI" id="CHEBI:43474"/>
        <dbReference type="ChEBI" id="CHEBI:57287"/>
        <dbReference type="ChEBI" id="CHEBI:57292"/>
        <dbReference type="ChEBI" id="CHEBI:58189"/>
    </reaction>
    <physiologicalReaction direction="right-to-left" evidence="1">
        <dbReference type="Rhea" id="RHEA:22122"/>
    </physiologicalReaction>
</comment>
<comment type="cofactor">
    <cofactor evidence="1">
        <name>Mg(2+)</name>
        <dbReference type="ChEBI" id="CHEBI:18420"/>
    </cofactor>
    <text evidence="1">Binds 1 Mg(2+) ion per subunit.</text>
</comment>
<comment type="pathway">
    <text evidence="1">Carbohydrate metabolism; tricarboxylic acid cycle; succinate from succinyl-CoA (ligase route): step 1/1.</text>
</comment>
<comment type="subunit">
    <text evidence="1">Heterotetramer of two alpha and two beta subunits.</text>
</comment>
<comment type="similarity">
    <text evidence="1">Belongs to the succinate/malate CoA ligase beta subunit family.</text>
</comment>